<gene>
    <name evidence="1" type="primary">rpsM</name>
    <name type="ordered locus">CGSHiEE_08065</name>
</gene>
<protein>
    <recommendedName>
        <fullName evidence="1">Small ribosomal subunit protein uS13</fullName>
    </recommendedName>
    <alternativeName>
        <fullName evidence="3">30S ribosomal protein S13</fullName>
    </alternativeName>
</protein>
<organism>
    <name type="scientific">Haemophilus influenzae (strain PittEE)</name>
    <dbReference type="NCBI Taxonomy" id="374930"/>
    <lineage>
        <taxon>Bacteria</taxon>
        <taxon>Pseudomonadati</taxon>
        <taxon>Pseudomonadota</taxon>
        <taxon>Gammaproteobacteria</taxon>
        <taxon>Pasteurellales</taxon>
        <taxon>Pasteurellaceae</taxon>
        <taxon>Haemophilus</taxon>
    </lineage>
</organism>
<name>RS13_HAEIE</name>
<accession>A5UDS5</accession>
<proteinExistence type="inferred from homology"/>
<reference key="1">
    <citation type="journal article" date="2007" name="Genome Biol.">
        <title>Characterization and modeling of the Haemophilus influenzae core and supragenomes based on the complete genomic sequences of Rd and 12 clinical nontypeable strains.</title>
        <authorList>
            <person name="Hogg J.S."/>
            <person name="Hu F.Z."/>
            <person name="Janto B."/>
            <person name="Boissy R."/>
            <person name="Hayes J."/>
            <person name="Keefe R."/>
            <person name="Post J.C."/>
            <person name="Ehrlich G.D."/>
        </authorList>
    </citation>
    <scope>NUCLEOTIDE SEQUENCE [LARGE SCALE GENOMIC DNA]</scope>
    <source>
        <strain>PittEE</strain>
    </source>
</reference>
<dbReference type="EMBL" id="CP000671">
    <property type="protein sequence ID" value="ABQ98926.1"/>
    <property type="molecule type" value="Genomic_DNA"/>
</dbReference>
<dbReference type="SMR" id="A5UDS5"/>
<dbReference type="KEGG" id="hip:CGSHiEE_08065"/>
<dbReference type="HOGENOM" id="CLU_103849_1_2_6"/>
<dbReference type="GO" id="GO:0005829">
    <property type="term" value="C:cytosol"/>
    <property type="evidence" value="ECO:0007669"/>
    <property type="project" value="TreeGrafter"/>
</dbReference>
<dbReference type="GO" id="GO:0015935">
    <property type="term" value="C:small ribosomal subunit"/>
    <property type="evidence" value="ECO:0007669"/>
    <property type="project" value="TreeGrafter"/>
</dbReference>
<dbReference type="GO" id="GO:0019843">
    <property type="term" value="F:rRNA binding"/>
    <property type="evidence" value="ECO:0007669"/>
    <property type="project" value="UniProtKB-UniRule"/>
</dbReference>
<dbReference type="GO" id="GO:0003735">
    <property type="term" value="F:structural constituent of ribosome"/>
    <property type="evidence" value="ECO:0007669"/>
    <property type="project" value="InterPro"/>
</dbReference>
<dbReference type="GO" id="GO:0000049">
    <property type="term" value="F:tRNA binding"/>
    <property type="evidence" value="ECO:0007669"/>
    <property type="project" value="UniProtKB-UniRule"/>
</dbReference>
<dbReference type="GO" id="GO:0006412">
    <property type="term" value="P:translation"/>
    <property type="evidence" value="ECO:0007669"/>
    <property type="project" value="UniProtKB-UniRule"/>
</dbReference>
<dbReference type="FunFam" id="1.10.8.50:FF:000001">
    <property type="entry name" value="30S ribosomal protein S13"/>
    <property type="match status" value="1"/>
</dbReference>
<dbReference type="FunFam" id="4.10.910.10:FF:000001">
    <property type="entry name" value="30S ribosomal protein S13"/>
    <property type="match status" value="1"/>
</dbReference>
<dbReference type="Gene3D" id="1.10.8.50">
    <property type="match status" value="1"/>
</dbReference>
<dbReference type="Gene3D" id="4.10.910.10">
    <property type="entry name" value="30s ribosomal protein s13, domain 2"/>
    <property type="match status" value="1"/>
</dbReference>
<dbReference type="HAMAP" id="MF_01315">
    <property type="entry name" value="Ribosomal_uS13"/>
    <property type="match status" value="1"/>
</dbReference>
<dbReference type="InterPro" id="IPR027437">
    <property type="entry name" value="Rbsml_uS13_C"/>
</dbReference>
<dbReference type="InterPro" id="IPR001892">
    <property type="entry name" value="Ribosomal_uS13"/>
</dbReference>
<dbReference type="InterPro" id="IPR010979">
    <property type="entry name" value="Ribosomal_uS13-like_H2TH"/>
</dbReference>
<dbReference type="InterPro" id="IPR019980">
    <property type="entry name" value="Ribosomal_uS13_bac-type"/>
</dbReference>
<dbReference type="InterPro" id="IPR018269">
    <property type="entry name" value="Ribosomal_uS13_CS"/>
</dbReference>
<dbReference type="NCBIfam" id="TIGR03631">
    <property type="entry name" value="uS13_bact"/>
    <property type="match status" value="1"/>
</dbReference>
<dbReference type="PANTHER" id="PTHR10871">
    <property type="entry name" value="30S RIBOSOMAL PROTEIN S13/40S RIBOSOMAL PROTEIN S18"/>
    <property type="match status" value="1"/>
</dbReference>
<dbReference type="PANTHER" id="PTHR10871:SF1">
    <property type="entry name" value="SMALL RIBOSOMAL SUBUNIT PROTEIN US13M"/>
    <property type="match status" value="1"/>
</dbReference>
<dbReference type="Pfam" id="PF00416">
    <property type="entry name" value="Ribosomal_S13"/>
    <property type="match status" value="1"/>
</dbReference>
<dbReference type="PIRSF" id="PIRSF002134">
    <property type="entry name" value="Ribosomal_S13"/>
    <property type="match status" value="1"/>
</dbReference>
<dbReference type="SUPFAM" id="SSF46946">
    <property type="entry name" value="S13-like H2TH domain"/>
    <property type="match status" value="1"/>
</dbReference>
<dbReference type="PROSITE" id="PS00646">
    <property type="entry name" value="RIBOSOMAL_S13_1"/>
    <property type="match status" value="1"/>
</dbReference>
<dbReference type="PROSITE" id="PS50159">
    <property type="entry name" value="RIBOSOMAL_S13_2"/>
    <property type="match status" value="1"/>
</dbReference>
<comment type="function">
    <text evidence="1">Located at the top of the head of the 30S subunit, it contacts several helices of the 16S rRNA. In the 70S ribosome it contacts the 23S rRNA (bridge B1a) and protein L5 of the 50S subunit (bridge B1b), connecting the 2 subunits; these bridges are implicated in subunit movement. Contacts the tRNAs in the A and P-sites.</text>
</comment>
<comment type="subunit">
    <text evidence="1">Part of the 30S ribosomal subunit. Forms a loose heterodimer with protein S19. Forms two bridges to the 50S subunit in the 70S ribosome.</text>
</comment>
<comment type="similarity">
    <text evidence="1">Belongs to the universal ribosomal protein uS13 family.</text>
</comment>
<keyword id="KW-0687">Ribonucleoprotein</keyword>
<keyword id="KW-0689">Ribosomal protein</keyword>
<keyword id="KW-0694">RNA-binding</keyword>
<keyword id="KW-0699">rRNA-binding</keyword>
<keyword id="KW-0820">tRNA-binding</keyword>
<evidence type="ECO:0000255" key="1">
    <source>
        <dbReference type="HAMAP-Rule" id="MF_01315"/>
    </source>
</evidence>
<evidence type="ECO:0000256" key="2">
    <source>
        <dbReference type="SAM" id="MobiDB-lite"/>
    </source>
</evidence>
<evidence type="ECO:0000305" key="3"/>
<feature type="chain" id="PRO_0000306614" description="Small ribosomal subunit protein uS13">
    <location>
        <begin position="1"/>
        <end position="118"/>
    </location>
</feature>
<feature type="region of interest" description="Disordered" evidence="2">
    <location>
        <begin position="94"/>
        <end position="118"/>
    </location>
</feature>
<sequence>MARIAGINIPDHKHAVIALTAIYGIGKTRSQAICAAAGIAEDVKIRELSEEQIDKLRDEVGKFTVEGDLRREVTLNIKRLLDLGCYRGLRHRRSLPVRGQRTKTNARTRKGPRKPIKK</sequence>